<dbReference type="EMBL" id="AL831973">
    <property type="protein sequence ID" value="CAD89901.1"/>
    <property type="status" value="ALT_FRAME"/>
    <property type="molecule type" value="mRNA"/>
</dbReference>
<dbReference type="EMBL" id="AL832361">
    <property type="status" value="NOT_ANNOTATED_CDS"/>
    <property type="molecule type" value="mRNA"/>
</dbReference>
<dbReference type="EMBL" id="BX647476">
    <property type="status" value="NOT_ANNOTATED_CDS"/>
    <property type="molecule type" value="mRNA"/>
</dbReference>
<dbReference type="EMBL" id="AC009171">
    <property type="status" value="NOT_ANNOTATED_CDS"/>
    <property type="molecule type" value="Genomic_DNA"/>
</dbReference>
<dbReference type="EMBL" id="AK302601">
    <property type="protein sequence ID" value="BAG63851.1"/>
    <property type="molecule type" value="mRNA"/>
</dbReference>
<dbReference type="CCDS" id="CCDS42113.1">
    <molecule id="Q86TD4-2"/>
</dbReference>
<dbReference type="CCDS" id="CCDS81943.1">
    <molecule id="Q86TD4-3"/>
</dbReference>
<dbReference type="RefSeq" id="NP_001092284.1">
    <molecule id="Q86TD4-2"/>
    <property type="nucleotide sequence ID" value="NM_001098814.2"/>
</dbReference>
<dbReference type="RefSeq" id="NP_001310596.1">
    <molecule id="Q86TD4-3"/>
    <property type="nucleotide sequence ID" value="NM_001323667.1"/>
</dbReference>
<dbReference type="RefSeq" id="NP_001310597.1">
    <molecule id="Q86TD4-3"/>
    <property type="nucleotide sequence ID" value="NM_001323668.1"/>
</dbReference>
<dbReference type="RefSeq" id="XP_016879017.1">
    <molecule id="Q86TD4-3"/>
    <property type="nucleotide sequence ID" value="XM_017023528.1"/>
</dbReference>
<dbReference type="RefSeq" id="XP_016879018.1">
    <molecule id="Q86TD4-3"/>
    <property type="nucleotide sequence ID" value="XM_017023529.2"/>
</dbReference>
<dbReference type="RefSeq" id="XP_047290402.1">
    <molecule id="Q86TD4-3"/>
    <property type="nucleotide sequence ID" value="XM_047434446.1"/>
</dbReference>
<dbReference type="RefSeq" id="XP_047290403.1">
    <molecule id="Q86TD4-3"/>
    <property type="nucleotide sequence ID" value="XM_047434447.1"/>
</dbReference>
<dbReference type="RefSeq" id="XP_054169570.1">
    <molecule id="Q86TD4-3"/>
    <property type="nucleotide sequence ID" value="XM_054313595.1"/>
</dbReference>
<dbReference type="RefSeq" id="XP_054169571.1">
    <molecule id="Q86TD4-3"/>
    <property type="nucleotide sequence ID" value="XM_054313596.1"/>
</dbReference>
<dbReference type="SMR" id="Q86TD4"/>
<dbReference type="BioGRID" id="112249">
    <property type="interactions" value="5"/>
</dbReference>
<dbReference type="FunCoup" id="Q86TD4">
    <property type="interactions" value="63"/>
</dbReference>
<dbReference type="IntAct" id="Q86TD4">
    <property type="interactions" value="5"/>
</dbReference>
<dbReference type="STRING" id="9606.ENSP00000382518"/>
<dbReference type="GlyCosmos" id="Q86TD4">
    <property type="glycosylation" value="2 sites, No reported glycans"/>
</dbReference>
<dbReference type="GlyGen" id="Q86TD4">
    <property type="glycosylation" value="2 sites"/>
</dbReference>
<dbReference type="iPTMnet" id="Q86TD4"/>
<dbReference type="PhosphoSitePlus" id="Q86TD4"/>
<dbReference type="BioMuta" id="SRL"/>
<dbReference type="DMDM" id="85540609"/>
<dbReference type="jPOST" id="Q86TD4"/>
<dbReference type="MassIVE" id="Q86TD4"/>
<dbReference type="PaxDb" id="9606-ENSP00000382518"/>
<dbReference type="PeptideAtlas" id="Q86TD4"/>
<dbReference type="ProteomicsDB" id="5546"/>
<dbReference type="ProteomicsDB" id="69686">
    <molecule id="Q86TD4-1"/>
</dbReference>
<dbReference type="ProteomicsDB" id="69687">
    <molecule id="Q86TD4-2"/>
</dbReference>
<dbReference type="Antibodypedia" id="55440">
    <property type="antibodies" value="38 antibodies from 12 providers"/>
</dbReference>
<dbReference type="DNASU" id="6345"/>
<dbReference type="Ensembl" id="ENST00000399609.7">
    <molecule id="Q86TD4-2"/>
    <property type="protein sequence ID" value="ENSP00000382518.3"/>
    <property type="gene ID" value="ENSG00000185739.13"/>
</dbReference>
<dbReference type="Ensembl" id="ENST00000537996.1">
    <molecule id="Q86TD4-3"/>
    <property type="protein sequence ID" value="ENSP00000440350.1"/>
    <property type="gene ID" value="ENSG00000185739.13"/>
</dbReference>
<dbReference type="GeneID" id="6345"/>
<dbReference type="KEGG" id="hsa:6345"/>
<dbReference type="MANE-Select" id="ENST00000399609.7">
    <property type="protein sequence ID" value="ENSP00000382518.3"/>
    <property type="RefSeq nucleotide sequence ID" value="NM_001098814.2"/>
    <property type="RefSeq protein sequence ID" value="NP_001092284.1"/>
</dbReference>
<dbReference type="UCSC" id="uc002cvz.4">
    <molecule id="Q86TD4-2"/>
    <property type="organism name" value="human"/>
</dbReference>
<dbReference type="UCSC" id="uc059qck.1">
    <property type="organism name" value="human"/>
</dbReference>
<dbReference type="AGR" id="HGNC:11295"/>
<dbReference type="CTD" id="6345"/>
<dbReference type="DisGeNET" id="6345"/>
<dbReference type="GeneCards" id="SRL"/>
<dbReference type="HGNC" id="HGNC:11295">
    <property type="gene designation" value="SRL"/>
</dbReference>
<dbReference type="HPA" id="ENSG00000185739">
    <property type="expression patterns" value="Group enriched (heart muscle, skeletal muscle, tongue)"/>
</dbReference>
<dbReference type="MalaCards" id="SRL"/>
<dbReference type="MIM" id="604992">
    <property type="type" value="gene"/>
</dbReference>
<dbReference type="neXtProt" id="NX_Q86TD4"/>
<dbReference type="OpenTargets" id="ENSG00000185739"/>
<dbReference type="PharmGKB" id="PA36119"/>
<dbReference type="VEuPathDB" id="HostDB:ENSG00000185739"/>
<dbReference type="eggNOG" id="KOG1954">
    <property type="taxonomic scope" value="Eukaryota"/>
</dbReference>
<dbReference type="GeneTree" id="ENSGT00940000157834"/>
<dbReference type="InParanoid" id="Q86TD4"/>
<dbReference type="OrthoDB" id="422720at2759"/>
<dbReference type="PAN-GO" id="Q86TD4">
    <property type="GO annotations" value="5 GO annotations based on evolutionary models"/>
</dbReference>
<dbReference type="PhylomeDB" id="Q86TD4"/>
<dbReference type="TreeFam" id="TF324008"/>
<dbReference type="PathwayCommons" id="Q86TD4"/>
<dbReference type="SignaLink" id="Q86TD4"/>
<dbReference type="BioGRID-ORCS" id="6345">
    <property type="hits" value="11 hits in 1140 CRISPR screens"/>
</dbReference>
<dbReference type="ChiTaRS" id="SRL">
    <property type="organism name" value="human"/>
</dbReference>
<dbReference type="GeneWiki" id="Sarcalumenin"/>
<dbReference type="GenomeRNAi" id="6345"/>
<dbReference type="Pharos" id="Q86TD4">
    <property type="development level" value="Tdark"/>
</dbReference>
<dbReference type="PRO" id="PR:Q86TD4"/>
<dbReference type="Proteomes" id="UP000005640">
    <property type="component" value="Chromosome 16"/>
</dbReference>
<dbReference type="RNAct" id="Q86TD4">
    <property type="molecule type" value="protein"/>
</dbReference>
<dbReference type="Bgee" id="ENSG00000185739">
    <property type="expression patterns" value="Expressed in hindlimb stylopod muscle and 148 other cell types or tissues"/>
</dbReference>
<dbReference type="ExpressionAtlas" id="Q86TD4">
    <property type="expression patterns" value="baseline and differential"/>
</dbReference>
<dbReference type="GO" id="GO:0033018">
    <property type="term" value="C:sarcoplasmic reticulum lumen"/>
    <property type="evidence" value="ECO:0007669"/>
    <property type="project" value="UniProtKB-SubCell"/>
</dbReference>
<dbReference type="GO" id="GO:0033017">
    <property type="term" value="C:sarcoplasmic reticulum membrane"/>
    <property type="evidence" value="ECO:0007669"/>
    <property type="project" value="UniProtKB-SubCell"/>
</dbReference>
<dbReference type="GO" id="GO:0005525">
    <property type="term" value="F:GTP binding"/>
    <property type="evidence" value="ECO:0007669"/>
    <property type="project" value="InterPro"/>
</dbReference>
<dbReference type="GO" id="GO:0002115">
    <property type="term" value="P:store-operated calcium entry"/>
    <property type="evidence" value="ECO:0000318"/>
    <property type="project" value="GO_Central"/>
</dbReference>
<dbReference type="CDD" id="cd09913">
    <property type="entry name" value="EHD"/>
    <property type="match status" value="1"/>
</dbReference>
<dbReference type="FunFam" id="3.40.50.300:FF:000635">
    <property type="entry name" value="Sarcalumenin, putative"/>
    <property type="match status" value="1"/>
</dbReference>
<dbReference type="Gene3D" id="1.10.268.20">
    <property type="match status" value="1"/>
</dbReference>
<dbReference type="Gene3D" id="3.40.50.300">
    <property type="entry name" value="P-loop containing nucleotide triphosphate hydrolases"/>
    <property type="match status" value="1"/>
</dbReference>
<dbReference type="InterPro" id="IPR045063">
    <property type="entry name" value="Dynamin_N"/>
</dbReference>
<dbReference type="InterPro" id="IPR031692">
    <property type="entry name" value="EHD_N"/>
</dbReference>
<dbReference type="InterPro" id="IPR030381">
    <property type="entry name" value="G_DYNAMIN_dom"/>
</dbReference>
<dbReference type="InterPro" id="IPR027417">
    <property type="entry name" value="P-loop_NTPase"/>
</dbReference>
<dbReference type="InterPro" id="IPR051943">
    <property type="entry name" value="TRAFAC_Dynamin-like_GTPase"/>
</dbReference>
<dbReference type="PANTHER" id="PTHR43681:SF1">
    <property type="entry name" value="SARCALUMENIN"/>
    <property type="match status" value="1"/>
</dbReference>
<dbReference type="PANTHER" id="PTHR43681">
    <property type="entry name" value="TRANSMEMBRANE GTPASE FZO"/>
    <property type="match status" value="1"/>
</dbReference>
<dbReference type="Pfam" id="PF00350">
    <property type="entry name" value="Dynamin_N"/>
    <property type="match status" value="1"/>
</dbReference>
<dbReference type="Pfam" id="PF16880">
    <property type="entry name" value="EHD_N"/>
    <property type="match status" value="1"/>
</dbReference>
<dbReference type="SUPFAM" id="SSF52540">
    <property type="entry name" value="P-loop containing nucleoside triphosphate hydrolases"/>
    <property type="match status" value="1"/>
</dbReference>
<dbReference type="PROSITE" id="PS51718">
    <property type="entry name" value="G_DYNAMIN_2"/>
    <property type="match status" value="1"/>
</dbReference>
<name>SRCA_HUMAN</name>
<comment type="interaction">
    <interactant intactId="EBI-12304565">
        <id>Q86TD4-2</id>
    </interactant>
    <interactant intactId="EBI-751501">
        <id>Q9Y2W7</id>
        <label>KCNIP3</label>
    </interactant>
    <organismsDiffer>false</organismsDiffer>
    <experiments>3</experiments>
</comment>
<comment type="interaction">
    <interactant intactId="EBI-12304565">
        <id>Q86TD4-2</id>
    </interactant>
    <interactant intactId="EBI-347996">
        <id>O43765</id>
        <label>SGTA</label>
    </interactant>
    <organismsDiffer>false</organismsDiffer>
    <experiments>3</experiments>
</comment>
<comment type="interaction">
    <interactant intactId="EBI-12304565">
        <id>Q86TD4-2</id>
    </interactant>
    <interactant intactId="EBI-740943">
        <id>P62760</id>
        <label>VSNL1</label>
    </interactant>
    <organismsDiffer>false</organismsDiffer>
    <experiments>3</experiments>
</comment>
<comment type="subcellular location">
    <subcellularLocation>
        <location evidence="1">Sarcoplasmic reticulum lumen</location>
    </subcellularLocation>
    <subcellularLocation>
        <location evidence="1">Sarcoplasmic reticulum membrane</location>
        <topology evidence="1">Peripheral membrane protein</topology>
    </subcellularLocation>
    <text evidence="1">May associate with the sarcoplasmic reticulum membrane, via a calcium-dependent mechanism.</text>
</comment>
<comment type="alternative products">
    <event type="alternative splicing"/>
    <isoform>
        <id>Q86TD4-2</id>
        <name>1</name>
        <sequence type="displayed"/>
    </isoform>
    <isoform>
        <id>Q86TD4-1</id>
        <name>2</name>
        <sequence type="described" ref="VSP_060763"/>
    </isoform>
    <isoform>
        <id>Q86TD4-3</id>
        <name>3</name>
        <sequence type="described" ref="VSP_060762"/>
    </isoform>
</comment>
<comment type="PTM">
    <text evidence="1">N-glycosylated.</text>
</comment>
<comment type="similarity">
    <text evidence="3">Belongs to the TRAFAC class dynamin-like GTPase superfamily. Dynamin/Fzo/YdjA family.</text>
</comment>
<comment type="sequence caution" evidence="4">
    <conflict type="frameshift">
        <sequence resource="EMBL-CDS" id="CAD89901"/>
    </conflict>
</comment>
<reference key="1">
    <citation type="journal article" date="2007" name="BMC Genomics">
        <title>The full-ORF clone resource of the German cDNA consortium.</title>
        <authorList>
            <person name="Bechtel S."/>
            <person name="Rosenfelder H."/>
            <person name="Duda A."/>
            <person name="Schmidt C.P."/>
            <person name="Ernst U."/>
            <person name="Wellenreuther R."/>
            <person name="Mehrle A."/>
            <person name="Schuster C."/>
            <person name="Bahr A."/>
            <person name="Bloecker H."/>
            <person name="Heubner D."/>
            <person name="Hoerlein A."/>
            <person name="Michel G."/>
            <person name="Wedler H."/>
            <person name="Koehrer K."/>
            <person name="Ottenwaelder B."/>
            <person name="Poustka A."/>
            <person name="Wiemann S."/>
            <person name="Schupp I."/>
        </authorList>
    </citation>
    <scope>NUCLEOTIDE SEQUENCE [LARGE SCALE MRNA] (ISOFORM 2)</scope>
    <scope>NUCLEOTIDE SEQUENCE [LARGE SCALE MRNA] OF 6-473 (ISOFORM 1)</scope>
    <source>
        <tissue>Skeletal muscle</tissue>
    </source>
</reference>
<reference key="2">
    <citation type="journal article" date="2004" name="Nature">
        <title>The sequence and analysis of duplication-rich human chromosome 16.</title>
        <authorList>
            <person name="Martin J."/>
            <person name="Han C."/>
            <person name="Gordon L.A."/>
            <person name="Terry A."/>
            <person name="Prabhakar S."/>
            <person name="She X."/>
            <person name="Xie G."/>
            <person name="Hellsten U."/>
            <person name="Chan Y.M."/>
            <person name="Altherr M."/>
            <person name="Couronne O."/>
            <person name="Aerts A."/>
            <person name="Bajorek E."/>
            <person name="Black S."/>
            <person name="Blumer H."/>
            <person name="Branscomb E."/>
            <person name="Brown N.C."/>
            <person name="Bruno W.J."/>
            <person name="Buckingham J.M."/>
            <person name="Callen D.F."/>
            <person name="Campbell C.S."/>
            <person name="Campbell M.L."/>
            <person name="Campbell E.W."/>
            <person name="Caoile C."/>
            <person name="Challacombe J.F."/>
            <person name="Chasteen L.A."/>
            <person name="Chertkov O."/>
            <person name="Chi H.C."/>
            <person name="Christensen M."/>
            <person name="Clark L.M."/>
            <person name="Cohn J.D."/>
            <person name="Denys M."/>
            <person name="Detter J.C."/>
            <person name="Dickson M."/>
            <person name="Dimitrijevic-Bussod M."/>
            <person name="Escobar J."/>
            <person name="Fawcett J.J."/>
            <person name="Flowers D."/>
            <person name="Fotopulos D."/>
            <person name="Glavina T."/>
            <person name="Gomez M."/>
            <person name="Gonzales E."/>
            <person name="Goodstein D."/>
            <person name="Goodwin L.A."/>
            <person name="Grady D.L."/>
            <person name="Grigoriev I."/>
            <person name="Groza M."/>
            <person name="Hammon N."/>
            <person name="Hawkins T."/>
            <person name="Haydu L."/>
            <person name="Hildebrand C.E."/>
            <person name="Huang W."/>
            <person name="Israni S."/>
            <person name="Jett J."/>
            <person name="Jewett P.B."/>
            <person name="Kadner K."/>
            <person name="Kimball H."/>
            <person name="Kobayashi A."/>
            <person name="Krawczyk M.-C."/>
            <person name="Leyba T."/>
            <person name="Longmire J.L."/>
            <person name="Lopez F."/>
            <person name="Lou Y."/>
            <person name="Lowry S."/>
            <person name="Ludeman T."/>
            <person name="Manohar C.F."/>
            <person name="Mark G.A."/>
            <person name="McMurray K.L."/>
            <person name="Meincke L.J."/>
            <person name="Morgan J."/>
            <person name="Moyzis R.K."/>
            <person name="Mundt M.O."/>
            <person name="Munk A.C."/>
            <person name="Nandkeshwar R.D."/>
            <person name="Pitluck S."/>
            <person name="Pollard M."/>
            <person name="Predki P."/>
            <person name="Parson-Quintana B."/>
            <person name="Ramirez L."/>
            <person name="Rash S."/>
            <person name="Retterer J."/>
            <person name="Ricke D.O."/>
            <person name="Robinson D.L."/>
            <person name="Rodriguez A."/>
            <person name="Salamov A."/>
            <person name="Saunders E.H."/>
            <person name="Scott D."/>
            <person name="Shough T."/>
            <person name="Stallings R.L."/>
            <person name="Stalvey M."/>
            <person name="Sutherland R.D."/>
            <person name="Tapia R."/>
            <person name="Tesmer J.G."/>
            <person name="Thayer N."/>
            <person name="Thompson L.S."/>
            <person name="Tice H."/>
            <person name="Torney D.C."/>
            <person name="Tran-Gyamfi M."/>
            <person name="Tsai M."/>
            <person name="Ulanovsky L.E."/>
            <person name="Ustaszewska A."/>
            <person name="Vo N."/>
            <person name="White P.S."/>
            <person name="Williams A.L."/>
            <person name="Wills P.L."/>
            <person name="Wu J.-R."/>
            <person name="Wu K."/>
            <person name="Yang J."/>
            <person name="DeJong P."/>
            <person name="Bruce D."/>
            <person name="Doggett N.A."/>
            <person name="Deaven L."/>
            <person name="Schmutz J."/>
            <person name="Grimwood J."/>
            <person name="Richardson P."/>
            <person name="Rokhsar D.S."/>
            <person name="Eichler E.E."/>
            <person name="Gilna P."/>
            <person name="Lucas S.M."/>
            <person name="Myers R.M."/>
            <person name="Rubin E.M."/>
            <person name="Pennacchio L.A."/>
        </authorList>
    </citation>
    <scope>NUCLEOTIDE SEQUENCE [LARGE SCALE GENOMIC DNA]</scope>
</reference>
<reference key="3">
    <citation type="journal article" date="2004" name="Nat. Genet.">
        <title>Complete sequencing and characterization of 21,243 full-length human cDNAs.</title>
        <authorList>
            <person name="Ota T."/>
            <person name="Suzuki Y."/>
            <person name="Nishikawa T."/>
            <person name="Otsuki T."/>
            <person name="Sugiyama T."/>
            <person name="Irie R."/>
            <person name="Wakamatsu A."/>
            <person name="Hayashi K."/>
            <person name="Sato H."/>
            <person name="Nagai K."/>
            <person name="Kimura K."/>
            <person name="Makita H."/>
            <person name="Sekine M."/>
            <person name="Obayashi M."/>
            <person name="Nishi T."/>
            <person name="Shibahara T."/>
            <person name="Tanaka T."/>
            <person name="Ishii S."/>
            <person name="Yamamoto J."/>
            <person name="Saito K."/>
            <person name="Kawai Y."/>
            <person name="Isono Y."/>
            <person name="Nakamura Y."/>
            <person name="Nagahari K."/>
            <person name="Murakami K."/>
            <person name="Yasuda T."/>
            <person name="Iwayanagi T."/>
            <person name="Wagatsuma M."/>
            <person name="Shiratori A."/>
            <person name="Sudo H."/>
            <person name="Hosoiri T."/>
            <person name="Kaku Y."/>
            <person name="Kodaira H."/>
            <person name="Kondo H."/>
            <person name="Sugawara M."/>
            <person name="Takahashi M."/>
            <person name="Kanda K."/>
            <person name="Yokoi T."/>
            <person name="Furuya T."/>
            <person name="Kikkawa E."/>
            <person name="Omura Y."/>
            <person name="Abe K."/>
            <person name="Kamihara K."/>
            <person name="Katsuta N."/>
            <person name="Sato K."/>
            <person name="Tanikawa M."/>
            <person name="Yamazaki M."/>
            <person name="Ninomiya K."/>
            <person name="Ishibashi T."/>
            <person name="Yamashita H."/>
            <person name="Murakawa K."/>
            <person name="Fujimori K."/>
            <person name="Tanai H."/>
            <person name="Kimata M."/>
            <person name="Watanabe M."/>
            <person name="Hiraoka S."/>
            <person name="Chiba Y."/>
            <person name="Ishida S."/>
            <person name="Ono Y."/>
            <person name="Takiguchi S."/>
            <person name="Watanabe S."/>
            <person name="Yosida M."/>
            <person name="Hotuta T."/>
            <person name="Kusano J."/>
            <person name="Kanehori K."/>
            <person name="Takahashi-Fujii A."/>
            <person name="Hara H."/>
            <person name="Tanase T.-O."/>
            <person name="Nomura Y."/>
            <person name="Togiya S."/>
            <person name="Komai F."/>
            <person name="Hara R."/>
            <person name="Takeuchi K."/>
            <person name="Arita M."/>
            <person name="Imose N."/>
            <person name="Musashino K."/>
            <person name="Yuuki H."/>
            <person name="Oshima A."/>
            <person name="Sasaki N."/>
            <person name="Aotsuka S."/>
            <person name="Yoshikawa Y."/>
            <person name="Matsunawa H."/>
            <person name="Ichihara T."/>
            <person name="Shiohata N."/>
            <person name="Sano S."/>
            <person name="Moriya S."/>
            <person name="Momiyama H."/>
            <person name="Satoh N."/>
            <person name="Takami S."/>
            <person name="Terashima Y."/>
            <person name="Suzuki O."/>
            <person name="Nakagawa S."/>
            <person name="Senoh A."/>
            <person name="Mizoguchi H."/>
            <person name="Goto Y."/>
            <person name="Shimizu F."/>
            <person name="Wakebe H."/>
            <person name="Hishigaki H."/>
            <person name="Watanabe T."/>
            <person name="Sugiyama A."/>
            <person name="Takemoto M."/>
            <person name="Kawakami B."/>
            <person name="Yamazaki M."/>
            <person name="Watanabe K."/>
            <person name="Kumagai A."/>
            <person name="Itakura S."/>
            <person name="Fukuzumi Y."/>
            <person name="Fujimori Y."/>
            <person name="Komiyama M."/>
            <person name="Tashiro H."/>
            <person name="Tanigami A."/>
            <person name="Fujiwara T."/>
            <person name="Ono T."/>
            <person name="Yamada K."/>
            <person name="Fujii Y."/>
            <person name="Ozaki K."/>
            <person name="Hirao M."/>
            <person name="Ohmori Y."/>
            <person name="Kawabata A."/>
            <person name="Hikiji T."/>
            <person name="Kobatake N."/>
            <person name="Inagaki H."/>
            <person name="Ikema Y."/>
            <person name="Okamoto S."/>
            <person name="Okitani R."/>
            <person name="Kawakami T."/>
            <person name="Noguchi S."/>
            <person name="Itoh T."/>
            <person name="Shigeta K."/>
            <person name="Senba T."/>
            <person name="Matsumura K."/>
            <person name="Nakajima Y."/>
            <person name="Mizuno T."/>
            <person name="Morinaga M."/>
            <person name="Sasaki M."/>
            <person name="Togashi T."/>
            <person name="Oyama M."/>
            <person name="Hata H."/>
            <person name="Watanabe M."/>
            <person name="Komatsu T."/>
            <person name="Mizushima-Sugano J."/>
            <person name="Satoh T."/>
            <person name="Shirai Y."/>
            <person name="Takahashi Y."/>
            <person name="Nakagawa K."/>
            <person name="Okumura K."/>
            <person name="Nagase T."/>
            <person name="Nomura N."/>
            <person name="Kikuchi H."/>
            <person name="Masuho Y."/>
            <person name="Yamashita R."/>
            <person name="Nakai K."/>
            <person name="Yada T."/>
            <person name="Nakamura Y."/>
            <person name="Ohara O."/>
            <person name="Isogai T."/>
            <person name="Sugano S."/>
        </authorList>
    </citation>
    <scope>NUCLEOTIDE SEQUENCE [LARGE SCALE MRNA] (ISOFORM 3)</scope>
    <source>
        <tissue>Testis</tissue>
    </source>
</reference>
<accession>Q86TD4</accession>
<accession>B4DYT9</accession>
<protein>
    <recommendedName>
        <fullName>Sarcalumenin</fullName>
    </recommendedName>
</protein>
<proteinExistence type="evidence at protein level"/>
<sequence>MRALVLLGCLLASLLFSGQAEETEDANEEAPLRDRSHIEKTLMLNEDKPSDDYSAVLQRLRKIYHSSIKPLEQSYKYNELRQHEITDGEITSKPMVLFLGPWSVGKSTMINYLLGLENTRYQLYTGAEPTTSEFTVLMHGPKLKTIEGIVMAADSARSFSPLEKFGQNFLEKLIGIEVPHKLLERVTFVDTPGIIENRKQQERGYPFNDVCQWFIDRADLIFVVFDPTKLDVGLELEMLFRQLKGRESQIRIILNKADNLATQMLMRVYGALFWSLAPLINVTEPPRVYVSSFWPQEYKPDTHQELFLQEEISLLEDLNQVIENRLENKIAFIRQHAIRVRIHALLVDRYLQTYKDKMTFFSDGELVFKDIVEDPDKFYIFKTILAKTNVSKFDLPNREAYKDFFGINPISSFKLLSQQCSYMGGCFLEKIERAITQELPGLLGSLGLGKNPGALNCDKTGCSETPKNRYRKH</sequence>
<evidence type="ECO:0000250" key="1">
    <source>
        <dbReference type="UniProtKB" id="P13666"/>
    </source>
</evidence>
<evidence type="ECO:0000255" key="2"/>
<evidence type="ECO:0000255" key="3">
    <source>
        <dbReference type="PROSITE-ProRule" id="PRU01055"/>
    </source>
</evidence>
<evidence type="ECO:0000305" key="4"/>
<organism>
    <name type="scientific">Homo sapiens</name>
    <name type="common">Human</name>
    <dbReference type="NCBI Taxonomy" id="9606"/>
    <lineage>
        <taxon>Eukaryota</taxon>
        <taxon>Metazoa</taxon>
        <taxon>Chordata</taxon>
        <taxon>Craniata</taxon>
        <taxon>Vertebrata</taxon>
        <taxon>Euteleostomi</taxon>
        <taxon>Mammalia</taxon>
        <taxon>Eutheria</taxon>
        <taxon>Euarchontoglires</taxon>
        <taxon>Primates</taxon>
        <taxon>Haplorrhini</taxon>
        <taxon>Catarrhini</taxon>
        <taxon>Hominidae</taxon>
        <taxon>Homo</taxon>
    </lineage>
</organism>
<keyword id="KW-0025">Alternative splicing</keyword>
<keyword id="KW-0325">Glycoprotein</keyword>
<keyword id="KW-0472">Membrane</keyword>
<keyword id="KW-1267">Proteomics identification</keyword>
<keyword id="KW-1185">Reference proteome</keyword>
<keyword id="KW-0703">Sarcoplasmic reticulum</keyword>
<keyword id="KW-0732">Signal</keyword>
<feature type="signal peptide" evidence="2">
    <location>
        <begin position="1"/>
        <end position="20"/>
    </location>
</feature>
<feature type="chain" id="PRO_0000045426" description="Sarcalumenin">
    <location>
        <begin position="21"/>
        <end position="473"/>
    </location>
</feature>
<feature type="domain" description="Dynamin-type G" evidence="3">
    <location>
        <begin position="90"/>
        <end position="331"/>
    </location>
</feature>
<feature type="region of interest" description="G1 motif" evidence="3">
    <location>
        <begin position="100"/>
        <end position="107"/>
    </location>
</feature>
<feature type="region of interest" description="G2 motif" evidence="3">
    <location>
        <begin position="128"/>
        <end position="129"/>
    </location>
</feature>
<feature type="region of interest" description="G3 motif" evidence="3">
    <location>
        <begin position="190"/>
        <end position="193"/>
    </location>
</feature>
<feature type="region of interest" description="G4 motif" evidence="3">
    <location>
        <begin position="255"/>
        <end position="258"/>
    </location>
</feature>
<feature type="region of interest" description="G5 motif" evidence="3">
    <location>
        <position position="278"/>
    </location>
</feature>
<feature type="glycosylation site" description="N-linked (GlcNAc...) asparagine" evidence="2">
    <location>
        <position position="281"/>
    </location>
</feature>
<feature type="glycosylation site" description="N-linked (GlcNAc...) asparagine" evidence="2">
    <location>
        <position position="389"/>
    </location>
</feature>
<feature type="splice variant" id="VSP_060762" description="In isoform 3." evidence="4">
    <location>
        <begin position="1"/>
        <end position="42"/>
    </location>
</feature>
<feature type="splice variant" id="VSP_060763" description="In isoform 2." evidence="4">
    <original>A</original>
    <variation>AELQVSASGGTEDVGNLLENHFSAGDASLEEKERALYADTAPQDKKLLLHYPDGREAESPKKTPASAASAGPDPEASLSNASATESPPPGERDDRDAAGPGEEKNGPPVASALPPGGAKGPVEEEWPEPSSGEGQGEEETGFGLPTEGTASGEAGGQAGGHELPEEVQEVQGDSLVQGAVAGTAEPKAEGASPHSEGDGVGPLNAEAEGSPGPGEEPAVPEGAPDVAAVGGESEPDIDTQASEGTEDQGEPGPAAEASAEPGGAQSVKAGDTEESQAPEMTEEDADEASSEEESGDGSGSEEEGGVPSEEESEEDSGDGASSEEAEGASEEATEPQEAGEPQEAREPQEGGDLQEAEESQEGGDPQEAEEPQEGGAPQEGGEPQEGGDPQEAREPQEAREPQEGAELPEATGTTSHRDRGAQPGPEELNTESMGSETLDMKAEEPEEGHQGRESPIIVAQ</variation>
    <location>
        <position position="20"/>
    </location>
</feature>
<feature type="sequence conflict" description="In Ref. 1; CAD89901." evidence="4" ref="1">
    <original>L</original>
    <variation>P</variation>
    <location>
        <position position="416"/>
    </location>
</feature>
<gene>
    <name type="primary">SRL</name>
</gene>